<feature type="chain" id="PRO_0000087502" description="Giant extracellular hemoglobin linker 2 chain">
    <location>
        <begin position="1"/>
        <end position="236"/>
    </location>
</feature>
<feature type="domain" description="LDL-receptor class A" evidence="1">
    <location>
        <begin position="66"/>
        <end position="108"/>
    </location>
</feature>
<feature type="disulfide bond" evidence="1">
    <location>
        <begin position="68"/>
        <end position="82"/>
    </location>
</feature>
<feature type="disulfide bond" evidence="1">
    <location>
        <begin position="75"/>
        <end position="95"/>
    </location>
</feature>
<feature type="disulfide bond" evidence="1">
    <location>
        <begin position="89"/>
        <end position="106"/>
    </location>
</feature>
<organism>
    <name type="scientific">Tylorrhynchus heterochetus</name>
    <name type="common">Japanese palolo worm</name>
    <name type="synonym">Nereis heterochaeta</name>
    <dbReference type="NCBI Taxonomy" id="3228785"/>
    <lineage>
        <taxon>Eukaryota</taxon>
        <taxon>Metazoa</taxon>
        <taxon>Spiralia</taxon>
        <taxon>Lophotrochozoa</taxon>
        <taxon>Annelida</taxon>
        <taxon>Polychaeta</taxon>
        <taxon>Errantia</taxon>
        <taxon>Phyllodocida</taxon>
        <taxon>Nereididae</taxon>
        <taxon>Tylorrhynchus</taxon>
    </lineage>
</organism>
<comment type="function">
    <text>Acts as a linker for the assembly of heme-containing chains in the construction of giant hemoglobin.</text>
</comment>
<comment type="subunit">
    <text>Disulfide-linked dimer of identical chains. A model is proposed for the subunit structure of the Tylorrhynchus hemoglobin, consisting of 216 polypeptides chains, 192 heme-containing chains, and 24 linker chains.</text>
</comment>
<accession>P18208</accession>
<reference key="1">
    <citation type="journal article" date="1990" name="J. Biol. Chem.">
        <title>Primary structure of two linker chains of the extracellular hemoglobin from the polychaete Tylorrhynchus heterochaetus.</title>
        <authorList>
            <person name="Suzuki T."/>
            <person name="Takagi T."/>
            <person name="Gotoh T."/>
        </authorList>
    </citation>
    <scope>PROTEIN SEQUENCE</scope>
</reference>
<proteinExistence type="evidence at protein level"/>
<evidence type="ECO:0000255" key="1">
    <source>
        <dbReference type="PROSITE-ProRule" id="PRU00124"/>
    </source>
</evidence>
<dbReference type="PIR" id="B36564">
    <property type="entry name" value="B36564"/>
</dbReference>
<dbReference type="SMR" id="P18208"/>
<dbReference type="GO" id="GO:0005344">
    <property type="term" value="F:oxygen carrier activity"/>
    <property type="evidence" value="ECO:0007669"/>
    <property type="project" value="UniProtKB-KW"/>
</dbReference>
<dbReference type="CDD" id="cd11673">
    <property type="entry name" value="hemoglobin_linker_C"/>
    <property type="match status" value="1"/>
</dbReference>
<dbReference type="CDD" id="cd00112">
    <property type="entry name" value="LDLa"/>
    <property type="match status" value="1"/>
</dbReference>
<dbReference type="Gene3D" id="2.40.128.620">
    <property type="match status" value="1"/>
</dbReference>
<dbReference type="InterPro" id="IPR031639">
    <property type="entry name" value="Eryth_link_C"/>
</dbReference>
<dbReference type="InterPro" id="IPR036153">
    <property type="entry name" value="Eryth_link_C_sf"/>
</dbReference>
<dbReference type="InterPro" id="IPR036055">
    <property type="entry name" value="LDL_receptor-like_sf"/>
</dbReference>
<dbReference type="InterPro" id="IPR023415">
    <property type="entry name" value="LDLR_class-A_CS"/>
</dbReference>
<dbReference type="InterPro" id="IPR002172">
    <property type="entry name" value="LDrepeatLR_classA_rpt"/>
</dbReference>
<dbReference type="Pfam" id="PF16915">
    <property type="entry name" value="Eryth_link_C"/>
    <property type="match status" value="1"/>
</dbReference>
<dbReference type="Pfam" id="PF00057">
    <property type="entry name" value="Ldl_recept_a"/>
    <property type="match status" value="1"/>
</dbReference>
<dbReference type="SMART" id="SM00192">
    <property type="entry name" value="LDLa"/>
    <property type="match status" value="1"/>
</dbReference>
<dbReference type="SUPFAM" id="SSF141480">
    <property type="entry name" value="Extracellular hemoglobin linker subunit, receptor domain"/>
    <property type="match status" value="1"/>
</dbReference>
<dbReference type="SUPFAM" id="SSF57424">
    <property type="entry name" value="LDL receptor-like module"/>
    <property type="match status" value="1"/>
</dbReference>
<dbReference type="PROSITE" id="PS01209">
    <property type="entry name" value="LDLRA_1"/>
    <property type="match status" value="1"/>
</dbReference>
<dbReference type="PROSITE" id="PS50068">
    <property type="entry name" value="LDLRA_2"/>
    <property type="match status" value="1"/>
</dbReference>
<sequence length="236" mass="26316">DDCVCPGGREWASVASKADSQEARVNRLAGRVEALAENLRAGGDRLSHYKSEFRELEFRVDELEGNGCEPRHFQCGGSAMECISDLLTCDGSPDCANGADEDSDVCHIPPIAGTLLVGHLNTDHDFCTKRKPNEFDLFISSVQRSSYFQSRLKVKGNLQIKYTAEGRDQEDVLQVKGYYNFGTHQLVILPPEDDRLGIVCNFRAGNDDRCRAHIVHEASLEHCGDDFVFVKEDDHH</sequence>
<name>GLBM_TYLHE</name>
<keyword id="KW-0903">Direct protein sequencing</keyword>
<keyword id="KW-1015">Disulfide bond</keyword>
<keyword id="KW-0561">Oxygen transport</keyword>
<keyword id="KW-0813">Transport</keyword>
<protein>
    <recommendedName>
        <fullName>Giant extracellular hemoglobin linker 2 chain</fullName>
    </recommendedName>
</protein>